<proteinExistence type="evidence at protein level"/>
<name>DUOX1_CAEEL</name>
<evidence type="ECO:0000250" key="1"/>
<evidence type="ECO:0000255" key="2"/>
<evidence type="ECO:0000255" key="3">
    <source>
        <dbReference type="PROSITE-ProRule" id="PRU00448"/>
    </source>
</evidence>
<evidence type="ECO:0000255" key="4">
    <source>
        <dbReference type="PROSITE-ProRule" id="PRU00716"/>
    </source>
</evidence>
<evidence type="ECO:0000269" key="5">
    <source>
    </source>
</evidence>
<evidence type="ECO:0000269" key="6">
    <source>
    </source>
</evidence>
<evidence type="ECO:0000269" key="7">
    <source>
    </source>
</evidence>
<evidence type="ECO:0000269" key="8">
    <source>
    </source>
</evidence>
<evidence type="ECO:0000269" key="9">
    <source>
    </source>
</evidence>
<evidence type="ECO:0000269" key="10">
    <source>
    </source>
</evidence>
<evidence type="ECO:0000269" key="11">
    <source>
    </source>
</evidence>
<evidence type="ECO:0000269" key="12">
    <source>
    </source>
</evidence>
<evidence type="ECO:0000305" key="13"/>
<evidence type="ECO:0000312" key="14">
    <source>
        <dbReference type="WormBase" id="F56C11.1"/>
    </source>
</evidence>
<accession>O61213</accession>
<accession>Q9NH90</accession>
<gene>
    <name evidence="14" type="primary">bli-3</name>
    <name evidence="14" type="ORF">F56C11.1</name>
</gene>
<protein>
    <recommendedName>
        <fullName>Dual oxidase 1</fullName>
        <shortName>DUOX1</shortName>
        <ecNumber>1.11.1.-</ecNumber>
        <ecNumber>1.6.3.1</ecNumber>
    </recommendedName>
    <alternativeName>
        <fullName>Blistered cuticle protein 3</fullName>
    </alternativeName>
    <alternativeName>
        <fullName>NADPH thyroid oxidase 1</fullName>
    </alternativeName>
</protein>
<feature type="signal peptide" evidence="2">
    <location>
        <begin position="1"/>
        <end position="21"/>
    </location>
</feature>
<feature type="chain" id="PRO_0000223348" description="Dual oxidase 1">
    <location>
        <begin position="22"/>
        <end position="1497"/>
    </location>
</feature>
<feature type="topological domain" description="Extracellular" evidence="2">
    <location>
        <begin position="22"/>
        <end position="587"/>
    </location>
</feature>
<feature type="transmembrane region" description="Helical" evidence="2">
    <location>
        <begin position="588"/>
        <end position="608"/>
    </location>
</feature>
<feature type="topological domain" description="Cytoplasmic" evidence="2">
    <location>
        <begin position="609"/>
        <end position="986"/>
    </location>
</feature>
<feature type="transmembrane region" description="Helical" evidence="2">
    <location>
        <begin position="987"/>
        <end position="1007"/>
    </location>
</feature>
<feature type="topological domain" description="Extracellular" evidence="2">
    <location>
        <begin position="1008"/>
        <end position="1024"/>
    </location>
</feature>
<feature type="transmembrane region" description="Helical" evidence="2">
    <location>
        <begin position="1025"/>
        <end position="1045"/>
    </location>
</feature>
<feature type="topological domain" description="Cytoplasmic" evidence="2">
    <location>
        <begin position="1046"/>
        <end position="1068"/>
    </location>
</feature>
<feature type="transmembrane region" description="Helical" evidence="2">
    <location>
        <begin position="1069"/>
        <end position="1089"/>
    </location>
</feature>
<feature type="topological domain" description="Extracellular" evidence="2">
    <location>
        <begin position="1090"/>
        <end position="1134"/>
    </location>
</feature>
<feature type="transmembrane region" description="Helical" evidence="2">
    <location>
        <begin position="1135"/>
        <end position="1155"/>
    </location>
</feature>
<feature type="topological domain" description="Cytoplasmic" evidence="2">
    <location>
        <begin position="1156"/>
        <end position="1163"/>
    </location>
</feature>
<feature type="transmembrane region" description="Helical" evidence="2">
    <location>
        <begin position="1164"/>
        <end position="1184"/>
    </location>
</feature>
<feature type="topological domain" description="Extracellular" evidence="2">
    <location>
        <begin position="1185"/>
        <end position="1189"/>
    </location>
</feature>
<feature type="transmembrane region" description="Helical" evidence="2">
    <location>
        <begin position="1190"/>
        <end position="1210"/>
    </location>
</feature>
<feature type="topological domain" description="Cytoplasmic" evidence="2">
    <location>
        <begin position="1211"/>
        <end position="1497"/>
    </location>
</feature>
<feature type="domain" description="EF-hand 1" evidence="3">
    <location>
        <begin position="817"/>
        <end position="852"/>
    </location>
</feature>
<feature type="domain" description="EF-hand 2" evidence="3">
    <location>
        <begin position="853"/>
        <end position="888"/>
    </location>
</feature>
<feature type="domain" description="Ferric oxidoreductase">
    <location>
        <begin position="1030"/>
        <end position="1210"/>
    </location>
</feature>
<feature type="domain" description="FAD-binding FR-type" evidence="4">
    <location>
        <begin position="1211"/>
        <end position="1318"/>
    </location>
</feature>
<feature type="region of interest" description="Peroxidase-like; mediates peroxidase activity">
    <location>
        <begin position="26"/>
        <end position="590"/>
    </location>
</feature>
<feature type="glycosylation site" description="N-linked (GlcNAc...) asparagine" evidence="6">
    <location>
        <position position="66"/>
    </location>
</feature>
<feature type="glycosylation site" description="N-linked (GlcNAc...) asparagine" evidence="2">
    <location>
        <position position="305"/>
    </location>
</feature>
<feature type="glycosylation site" description="N-linked (GlcNAc...) asparagine" evidence="2">
    <location>
        <position position="567"/>
    </location>
</feature>
<feature type="glycosylation site" description="N-linked (GlcNAc...) asparagine" evidence="2">
    <location>
        <position position="586"/>
    </location>
</feature>
<feature type="mutagenesis site" description="In e767; growth arrest, severe blistering of the cuticle, incomplete molting and mild shorter and stouter body shape. Resistant to iodide toxicity. Reduced catalase activity. In a pah-1(tm520) mutant background, growth arrest in early larval development, severe cuticle abnormalities with large blisters and increased superoxide dismutase activity." evidence="7 10">
    <original>G</original>
    <variation>D</variation>
    <location>
        <position position="246"/>
    </location>
</feature>
<feature type="mutagenesis site" description="In mac40; blistered cuticle phenotype in some animals with blisters containing cellular material. Resistant to iodide toxicity." evidence="10">
    <original>A</original>
    <variation>T</variation>
    <location>
        <position position="1263"/>
    </location>
</feature>
<feature type="mutagenesis site" description="In im10; blistered cuticle phenotype with accumulation of cellular material in blisters." evidence="9">
    <original>P</original>
    <variation>L</variation>
    <location>
        <position position="1311"/>
    </location>
</feature>
<feature type="sequence conflict" description="In Ref. 1; AAF71303." evidence="13" ref="1">
    <original>Y</original>
    <variation>H</variation>
    <location>
        <position position="105"/>
    </location>
</feature>
<feature type="sequence conflict" description="In Ref. 1; AAF71303." evidence="13" ref="1">
    <original>T</original>
    <variation>I</variation>
    <location>
        <position position="829"/>
    </location>
</feature>
<sequence length="1497" mass="170416">MRSKHVLYIAILFSSIFGGKGIQQNEEFQRYDGWYNNLANSEWGSAGSRLHRDARSYYSDGVYSVNNSLPSARELSDILFKGESGIPNTRGCTTLLAFFSQVVAYEIMQSNGVSCPLETLKIQVPLCDNVFDKECEGKTEIPFTRAKYDKATGNGLNSPREQINERTSWIDGSFIYGTTQPWVSSLRSFKQGRLAEGVPGYPPLNNPHIPLNNPAPPQVHRLMSPDRLFMLGDSRVNENPGLLSFGLILFRWHNYNANQIHREHPDWTDEQIFQAARRLVIASMQKIIAYDFVPGLLGEDVRLSNYTKYMPHVPPGISHAFGAAAFRFPHSIVPPAMLLRKRGNKCEFRTEVGGYPALRLCQNWWNAQDIVKEYSVDEIILGMASQIAERDDNIVVEDLRDYIFGPMHFSRLDVVASSIMRGRDNGVPPYNELRRTFGLAPKTWETMNEDFYKKHTAKVEKLKELYGGNILYLDAYVGGMLEGGENGPGELFKEIIKDQFTRIRDGDRFWFENKLNGLFTDEEVQMIHSITLRDIIKATTDIDETMLQKDVFFFKEGDPCPQPFQVNTTGLEPCVPFMQSTYWTDNDTTYVFTLIGLACVPLICYGIGRYLVNRRIAIGHNSACDSLTTDFANDDCGAKGDIYGVNALEWLQEEYIRQVRIEIENTTLAVKKPRGGILRKIRFETGQKIELFHSMPNPSAMHGPFVLLSQKNNHHLVIRLSSDRDLSKFLDQIRQAASGINAEVIIKDEENSILLSQAITKERRQDRLDLFFREAYAKAFNDSELQDSETSFDSSNDDILNETISREELASAMGMKANNEFVKRMFAMTAKHNEDSLSFNEFLTVLREFVNAPQKQKLQTLFKMCDLEGKNKVLRKDLAELVKSLNQTAGVHITESVQLRLFNEVLHYAGVSNDAKYLTYDDFNALFSDIPDKQPVGLPFNRKNYQPSIGETSSLNSFAVVDRSINSSAPLTLIHKVSAFLETYRQHVFIVFCFVAINLVLFFERFWHYRYMAENRDLRRVMGAGIAITRGAAGALSFCMALILLTVCRNIITLLRETVIAQYIPFDSAIAFHKIVALFAAFWATLHTVGHCVNFYHVGTQSQEGLACLFQEAFFGSNFLPSISYWFFSTITGLTGIALVAVMCIIYVFALPCFIKRAYHAFRLTHLLNIAFYALTLLHGLPKLLDSPKFGYYVVGPIVLFVIDRIIGLMQYYKKLEIVNAEILPSDIIYIEYRRPREFKYKSGQWVTVSSPSISCTFNESHAFSIASSPQDENMKLYIKAVGPWTWKLRSELIRSLNTGSPFPLIHMKGPYGDGNQEWMDYEVAIMVGAGIGVTPYASTLVDLVQRTSSDSFHRVRCRKVYFLWVCSTHKNYEWFVDVLKNVEDQARSGILETHIFVTQTFHKFDLRTTMLYICEKHFRATNSGISMFTGLHAKNHFGRPNFKAFFQFIQSEHKEQSKIGVFSCGPVNLNESIAEGCADANRQRDAPSFAHRFETF</sequence>
<reference key="1">
    <citation type="journal article" date="2001" name="J. Cell Biol.">
        <title>Tyrosine cross-linking of extracellular matrix is catalyzed by Duox, a multidomain oxidase/peroxidase with homology to the phagocyte oxidase subunit gp91phox.</title>
        <authorList>
            <person name="Edens W.A."/>
            <person name="Sharling L."/>
            <person name="Cheng G."/>
            <person name="Shapira R."/>
            <person name="Kinkade J.M."/>
            <person name="Lee T."/>
            <person name="Edens H.A."/>
            <person name="Tang X."/>
            <person name="Sullards C."/>
            <person name="Flaherty D.B."/>
            <person name="Benian G.M."/>
            <person name="Lambeth J.D."/>
        </authorList>
    </citation>
    <scope>NUCLEOTIDE SEQUENCE [MRNA]</scope>
    <scope>FUNCTION</scope>
    <scope>CATALYTIC ACTIVITY</scope>
    <scope>ACTIVITY REGULATION</scope>
    <scope>TISSUE SPECIFICITY</scope>
</reference>
<reference key="2">
    <citation type="journal article" date="1998" name="Science">
        <title>Genome sequence of the nematode C. elegans: a platform for investigating biology.</title>
        <authorList>
            <consortium name="The C. elegans sequencing consortium"/>
        </authorList>
    </citation>
    <scope>NUCLEOTIDE SEQUENCE [LARGE SCALE GENOMIC DNA]</scope>
    <source>
        <strain>Bristol N2</strain>
    </source>
</reference>
<reference key="3">
    <citation type="journal article" date="2007" name="Mol. Cell. Proteomics">
        <title>Proteomics reveals N-linked glycoprotein diversity in Caenorhabditis elegans and suggests an atypical translocation mechanism for integral membrane proteins.</title>
        <authorList>
            <person name="Kaji H."/>
            <person name="Kamiie J."/>
            <person name="Kawakami H."/>
            <person name="Kido K."/>
            <person name="Yamauchi Y."/>
            <person name="Shinkawa T."/>
            <person name="Taoka M."/>
            <person name="Takahashi N."/>
            <person name="Isobe T."/>
        </authorList>
    </citation>
    <scope>GLYCOSYLATION [LARGE SCALE ANALYSIS] AT ASN-66</scope>
    <scope>IDENTIFICATION BY MASS SPECTROMETRY</scope>
    <source>
        <strain>Bristol N2</strain>
    </source>
</reference>
<reference key="4">
    <citation type="journal article" date="2008" name="FASEB J.">
        <title>Anabolic function of phenylalanine hydroxylase in Caenorhabditis elegans.</title>
        <authorList>
            <person name="Calvo A.C."/>
            <person name="Pey A.L."/>
            <person name="Ying M."/>
            <person name="Loer C.M."/>
            <person name="Martinez A."/>
        </authorList>
    </citation>
    <scope>FUNCTION</scope>
    <scope>MUTAGENESIS OF GLY-246</scope>
</reference>
<reference key="5">
    <citation type="journal article" date="2009" name="J. Biol. Chem.">
        <title>Combined extracellular matrix cross-linking activity of the peroxidase MLT-7 and the dual oxidase BLI-3 is critical for post-embryonic viability in Caenorhabditis elegans.</title>
        <authorList>
            <person name="Thein M.C."/>
            <person name="Winter A.D."/>
            <person name="Stepek G."/>
            <person name="McCormack G."/>
            <person name="Stapleton G."/>
            <person name="Johnstone I.L."/>
            <person name="Page A.P."/>
        </authorList>
    </citation>
    <scope>FUNCTION</scope>
</reference>
<reference key="6">
    <citation type="journal article" date="2012" name="PLoS Genet.">
        <title>Tetraspanin is required for generation of reactive oxygen species by the dual oxidase system in Caenorhabditis elegans.</title>
        <authorList>
            <person name="Moribe H."/>
            <person name="Konakawa R."/>
            <person name="Koga D."/>
            <person name="Ushiki T."/>
            <person name="Nakamura K."/>
            <person name="Mekada E."/>
        </authorList>
    </citation>
    <scope>FUNCTION</scope>
    <scope>INTERACTION WITH DOXA-1 AND TSP-15</scope>
    <scope>DISRUPTION PHENOTYPE</scope>
    <scope>MUTAGENESIS OF PRO-1311</scope>
</reference>
<reference key="7">
    <citation type="journal article" date="2015" name="G3 (Bethesda)">
        <title>The BLI-3/TSP-15/DOXA-1 dual oxidase complex is required for iodide toxicity in Caenorhabditis elegans.</title>
        <authorList>
            <person name="Xu Z."/>
            <person name="Luo J."/>
            <person name="Li Y."/>
            <person name="Ma L."/>
        </authorList>
    </citation>
    <scope>FUNCTION</scope>
    <scope>DISRUPTION PHENOTYPE</scope>
    <scope>MUTAGENESIS OF GLY-246 AND ALA-1263</scope>
</reference>
<reference key="8">
    <citation type="journal article" date="2016" name="Cell Rep.">
        <title>Proline Catabolism Modulates Innate Immunity in Caenorhabditis elegans.</title>
        <authorList>
            <person name="Tang H."/>
            <person name="Pang S."/>
        </authorList>
    </citation>
    <scope>FUNCTION</scope>
    <scope>DISRUPTION PHENOTYPE</scope>
</reference>
<reference key="9">
    <citation type="journal article" date="2017" name="Elife">
        <title>NADPH oxidase-mediated redox signaling promotes oxidative stress resistance and longevity through memo-1 in C. elegans.</title>
        <authorList>
            <person name="Ewald C.Y."/>
            <person name="Hourihan J.M."/>
            <person name="Bland M.S."/>
            <person name="Obieglo C."/>
            <person name="Katic I."/>
            <person name="Moronetti Mazzeo L.E."/>
            <person name="Alcedo J."/>
            <person name="Blackwell T.K."/>
            <person name="Hynes N.E."/>
        </authorList>
    </citation>
    <scope>FUNCTION</scope>
    <scope>INTERACTION WITH RHO-1</scope>
    <scope>DISRUPTION PHENOTYPE</scope>
</reference>
<comment type="function">
    <text evidence="5 7 8 9 10 11 12">Plays a role in cuticle biogenesis (PubMed:11514595, PubMed:18460651, PubMed:19406744, PubMed:23028364, PubMed:25480962). In complex with doxa-1 and tsp-15, produces reactive oxygen species (ROS), which are probably used by mlt-7 for tyrosine cross-linking, thus stabilizing cuticular extracellular matrix (PubMed:11514595, PubMed:19406744, PubMed:23028364). May regulate the production of ROS by playing a role in modulating proline catabolism (PubMed:27974198). Required in combination with mlt-7 for correct formation of cross-links in cuticle collagens (PubMed:19406744). Association with the GTPase rho-1 promotes ROS production and this interaction may be modulated by memo-1, in order to control the oxidative stress response and longevity (PubMed:28085666).</text>
</comment>
<comment type="catalytic activity">
    <reaction evidence="5">
        <text>NADH + O2 + H(+) = H2O2 + NAD(+)</text>
        <dbReference type="Rhea" id="RHEA:11264"/>
        <dbReference type="ChEBI" id="CHEBI:15378"/>
        <dbReference type="ChEBI" id="CHEBI:15379"/>
        <dbReference type="ChEBI" id="CHEBI:16240"/>
        <dbReference type="ChEBI" id="CHEBI:57540"/>
        <dbReference type="ChEBI" id="CHEBI:57945"/>
        <dbReference type="EC" id="1.6.3.1"/>
    </reaction>
</comment>
<comment type="catalytic activity">
    <reaction evidence="5">
        <text>NADPH + O2 + H(+) = H2O2 + NADP(+)</text>
        <dbReference type="Rhea" id="RHEA:11260"/>
        <dbReference type="ChEBI" id="CHEBI:15378"/>
        <dbReference type="ChEBI" id="CHEBI:15379"/>
        <dbReference type="ChEBI" id="CHEBI:16240"/>
        <dbReference type="ChEBI" id="CHEBI:57783"/>
        <dbReference type="ChEBI" id="CHEBI:58349"/>
        <dbReference type="EC" id="1.6.3.1"/>
    </reaction>
</comment>
<comment type="activity regulation">
    <text evidence="5">Peroxidase activity is inhibited by aminobenzohydrazide.</text>
</comment>
<comment type="subunit">
    <text evidence="9 12">Interacts with doxa-1 and tsp-15 (PubMed:23028364). Interacts with rho-1 (PubMed:28085666).</text>
</comment>
<comment type="subcellular location">
    <subcellularLocation>
        <location evidence="1">Membrane</location>
        <topology evidence="1">Multi-pass membrane protein</topology>
    </subcellularLocation>
</comment>
<comment type="tissue specificity">
    <text evidence="5">Expressed in hypodermal cells.</text>
</comment>
<comment type="disruption phenotype">
    <text evidence="9 10 11 12">RNAi-mediated knockdown results in a blistered cuticle phenotype (PubMed:23028364, PubMed:25480962). Resistant to iodide toxicity (PubMed:25480962). RNAi-mediated knockdown in combination with proline supplementation suppresses the effects of exogenous proline alone and increases reactive oxygen species production and reduces the expression of skn-1 transcriptional targets including gst-4 following infection by P.aeruginosa (PubMed:27974198). RNAi-mediated knockdown rescues the enhanced longevity and increased reactive oxygen species production defects in memo-1 mutants (PubMed:28085666). RNAi-mediated knockdown suppresses the nuclear localization of transcription factor skn-1 in memo-1 RNAi mutants (PubMed:28085666).</text>
</comment>
<comment type="similarity">
    <text evidence="13">In the N-terminal section; belongs to the peroxidase family.</text>
</comment>
<keyword id="KW-0106">Calcium</keyword>
<keyword id="KW-0274">FAD</keyword>
<keyword id="KW-0285">Flavoprotein</keyword>
<keyword id="KW-0325">Glycoprotein</keyword>
<keyword id="KW-0376">Hydrogen peroxide</keyword>
<keyword id="KW-0472">Membrane</keyword>
<keyword id="KW-0521">NADP</keyword>
<keyword id="KW-0560">Oxidoreductase</keyword>
<keyword id="KW-0575">Peroxidase</keyword>
<keyword id="KW-1185">Reference proteome</keyword>
<keyword id="KW-0677">Repeat</keyword>
<keyword id="KW-0732">Signal</keyword>
<keyword id="KW-0812">Transmembrane</keyword>
<keyword id="KW-1133">Transmembrane helix</keyword>
<dbReference type="EC" id="1.11.1.-"/>
<dbReference type="EC" id="1.6.3.1"/>
<dbReference type="EMBL" id="AF229855">
    <property type="protein sequence ID" value="AAF71303.1"/>
    <property type="molecule type" value="mRNA"/>
</dbReference>
<dbReference type="EMBL" id="BX284601">
    <property type="protein sequence ID" value="CCD71714.1"/>
    <property type="molecule type" value="Genomic_DNA"/>
</dbReference>
<dbReference type="PIR" id="T29025">
    <property type="entry name" value="T29025"/>
</dbReference>
<dbReference type="RefSeq" id="NP_490686.3">
    <property type="nucleotide sequence ID" value="NM_058285.4"/>
</dbReference>
<dbReference type="SMR" id="O61213"/>
<dbReference type="BioGRID" id="37112">
    <property type="interactions" value="6"/>
</dbReference>
<dbReference type="ComplexPortal" id="CPX-1020">
    <property type="entry name" value="BLI-3/DOXA-1/TSP-15 dual oxidase complex"/>
</dbReference>
<dbReference type="FunCoup" id="O61213">
    <property type="interactions" value="16"/>
</dbReference>
<dbReference type="STRING" id="6239.F56C11.1.1"/>
<dbReference type="PeroxiBase" id="3349">
    <property type="entry name" value="CelDuOx01"/>
</dbReference>
<dbReference type="GlyCosmos" id="O61213">
    <property type="glycosylation" value="4 sites, No reported glycans"/>
</dbReference>
<dbReference type="iPTMnet" id="O61213"/>
<dbReference type="PaxDb" id="6239-F56C11.1"/>
<dbReference type="PeptideAtlas" id="O61213"/>
<dbReference type="EnsemblMetazoa" id="F56C11.1.1">
    <property type="protein sequence ID" value="F56C11.1.1"/>
    <property type="gene ID" value="WBGene00000253"/>
</dbReference>
<dbReference type="EnsemblMetazoa" id="F56C11.1.2">
    <property type="protein sequence ID" value="F56C11.1.2"/>
    <property type="gene ID" value="WBGene00000253"/>
</dbReference>
<dbReference type="GeneID" id="171608"/>
<dbReference type="KEGG" id="cel:CELE_F56C11.1"/>
<dbReference type="UCSC" id="F56C11.1">
    <property type="organism name" value="c. elegans"/>
</dbReference>
<dbReference type="AGR" id="WB:WBGene00000253"/>
<dbReference type="CTD" id="171608"/>
<dbReference type="WormBase" id="F56C11.1">
    <property type="protein sequence ID" value="CE28463"/>
    <property type="gene ID" value="WBGene00000253"/>
    <property type="gene designation" value="bli-3"/>
</dbReference>
<dbReference type="eggNOG" id="KOG0039">
    <property type="taxonomic scope" value="Eukaryota"/>
</dbReference>
<dbReference type="GeneTree" id="ENSGT00940000163963"/>
<dbReference type="HOGENOM" id="CLU_004482_1_0_1"/>
<dbReference type="InParanoid" id="O61213"/>
<dbReference type="OMA" id="QRYDYFE"/>
<dbReference type="OrthoDB" id="6019201at2759"/>
<dbReference type="PhylomeDB" id="O61213"/>
<dbReference type="BRENDA" id="1.6.3.1">
    <property type="organism ID" value="1045"/>
</dbReference>
<dbReference type="Reactome" id="R-CEL-209968">
    <property type="pathway name" value="Thyroxine biosynthesis"/>
</dbReference>
<dbReference type="PRO" id="PR:O61213"/>
<dbReference type="Proteomes" id="UP000001940">
    <property type="component" value="Chromosome I"/>
</dbReference>
<dbReference type="Bgee" id="WBGene00000253">
    <property type="expression patterns" value="Expressed in larva and 3 other cell types or tissues"/>
</dbReference>
<dbReference type="GO" id="GO:0043020">
    <property type="term" value="C:NADPH oxidase complex"/>
    <property type="evidence" value="ECO:0000318"/>
    <property type="project" value="GO_Central"/>
</dbReference>
<dbReference type="GO" id="GO:1990204">
    <property type="term" value="C:oxidoreductase complex"/>
    <property type="evidence" value="ECO:0000314"/>
    <property type="project" value="ComplexPortal"/>
</dbReference>
<dbReference type="GO" id="GO:0005886">
    <property type="term" value="C:plasma membrane"/>
    <property type="evidence" value="ECO:0000314"/>
    <property type="project" value="WormBase"/>
</dbReference>
<dbReference type="GO" id="GO:0005509">
    <property type="term" value="F:calcium ion binding"/>
    <property type="evidence" value="ECO:0007669"/>
    <property type="project" value="InterPro"/>
</dbReference>
<dbReference type="GO" id="GO:0020037">
    <property type="term" value="F:heme binding"/>
    <property type="evidence" value="ECO:0000314"/>
    <property type="project" value="WormBase"/>
</dbReference>
<dbReference type="GO" id="GO:0016174">
    <property type="term" value="F:NAD(P)H oxidase H2O2-forming activity"/>
    <property type="evidence" value="ECO:0000315"/>
    <property type="project" value="WormBase"/>
</dbReference>
<dbReference type="GO" id="GO:0106293">
    <property type="term" value="F:NADH oxidase H202-forming activity"/>
    <property type="evidence" value="ECO:0007669"/>
    <property type="project" value="RHEA"/>
</dbReference>
<dbReference type="GO" id="GO:0106294">
    <property type="term" value="F:NADPH oxidase H202-forming activity"/>
    <property type="evidence" value="ECO:0007669"/>
    <property type="project" value="RHEA"/>
</dbReference>
<dbReference type="GO" id="GO:0004601">
    <property type="term" value="F:peroxidase activity"/>
    <property type="evidence" value="ECO:0000314"/>
    <property type="project" value="WormBase"/>
</dbReference>
<dbReference type="GO" id="GO:0016175">
    <property type="term" value="F:superoxide-generating NAD(P)H oxidase activity"/>
    <property type="evidence" value="ECO:0000318"/>
    <property type="project" value="GO_Central"/>
</dbReference>
<dbReference type="GO" id="GO:0040002">
    <property type="term" value="P:collagen and cuticulin-based cuticle development"/>
    <property type="evidence" value="ECO:0000314"/>
    <property type="project" value="ComplexPortal"/>
</dbReference>
<dbReference type="GO" id="GO:0042338">
    <property type="term" value="P:cuticle development involved in collagen and cuticulin-based cuticle molting cycle"/>
    <property type="evidence" value="ECO:0000315"/>
    <property type="project" value="WormBase"/>
</dbReference>
<dbReference type="GO" id="GO:0006952">
    <property type="term" value="P:defense response"/>
    <property type="evidence" value="ECO:0000318"/>
    <property type="project" value="GO_Central"/>
</dbReference>
<dbReference type="GO" id="GO:0050832">
    <property type="term" value="P:defense response to fungus"/>
    <property type="evidence" value="ECO:0000315"/>
    <property type="project" value="WormBase"/>
</dbReference>
<dbReference type="GO" id="GO:0050830">
    <property type="term" value="P:defense response to Gram-positive bacterium"/>
    <property type="evidence" value="ECO:0000315"/>
    <property type="project" value="WormBase"/>
</dbReference>
<dbReference type="GO" id="GO:0042744">
    <property type="term" value="P:hydrogen peroxide catabolic process"/>
    <property type="evidence" value="ECO:0007669"/>
    <property type="project" value="UniProtKB-KW"/>
</dbReference>
<dbReference type="GO" id="GO:0002119">
    <property type="term" value="P:nematode larval development"/>
    <property type="evidence" value="ECO:0000316"/>
    <property type="project" value="WormBase"/>
</dbReference>
<dbReference type="GO" id="GO:0040032">
    <property type="term" value="P:post-embryonic body morphogenesis"/>
    <property type="evidence" value="ECO:0000315"/>
    <property type="project" value="WormBase"/>
</dbReference>
<dbReference type="GO" id="GO:0006979">
    <property type="term" value="P:response to oxidative stress"/>
    <property type="evidence" value="ECO:0000316"/>
    <property type="project" value="WormBase"/>
</dbReference>
<dbReference type="GO" id="GO:0042554">
    <property type="term" value="P:superoxide anion generation"/>
    <property type="evidence" value="ECO:0000318"/>
    <property type="project" value="GO_Central"/>
</dbReference>
<dbReference type="CDD" id="cd09820">
    <property type="entry name" value="dual_peroxidase_like"/>
    <property type="match status" value="1"/>
</dbReference>
<dbReference type="CDD" id="cd06186">
    <property type="entry name" value="NOX_Duox_like_FAD_NADP"/>
    <property type="match status" value="1"/>
</dbReference>
<dbReference type="FunFam" id="1.10.640.10:FF:000015">
    <property type="entry name" value="DUal OXidase"/>
    <property type="match status" value="1"/>
</dbReference>
<dbReference type="FunFam" id="2.40.30.10:FF:000195">
    <property type="entry name" value="DUal OXidase"/>
    <property type="match status" value="1"/>
</dbReference>
<dbReference type="FunFam" id="3.40.50.80:FF:000020">
    <property type="entry name" value="Dual oxidase 1"/>
    <property type="match status" value="1"/>
</dbReference>
<dbReference type="Gene3D" id="1.10.238.10">
    <property type="entry name" value="EF-hand"/>
    <property type="match status" value="1"/>
</dbReference>
<dbReference type="Gene3D" id="1.10.640.10">
    <property type="entry name" value="Haem peroxidase domain superfamily, animal type"/>
    <property type="match status" value="1"/>
</dbReference>
<dbReference type="Gene3D" id="3.40.50.80">
    <property type="entry name" value="Nucleotide-binding domain of ferredoxin-NADP reductase (FNR) module"/>
    <property type="match status" value="1"/>
</dbReference>
<dbReference type="Gene3D" id="2.40.30.10">
    <property type="entry name" value="Translation factors"/>
    <property type="match status" value="1"/>
</dbReference>
<dbReference type="InterPro" id="IPR034821">
    <property type="entry name" value="DUOX_peroxidase"/>
</dbReference>
<dbReference type="InterPro" id="IPR011992">
    <property type="entry name" value="EF-hand-dom_pair"/>
</dbReference>
<dbReference type="InterPro" id="IPR002048">
    <property type="entry name" value="EF_hand_dom"/>
</dbReference>
<dbReference type="InterPro" id="IPR013112">
    <property type="entry name" value="FAD-bd_8"/>
</dbReference>
<dbReference type="InterPro" id="IPR017927">
    <property type="entry name" value="FAD-bd_FR_type"/>
</dbReference>
<dbReference type="InterPro" id="IPR013130">
    <property type="entry name" value="Fe3_Rdtase_TM_dom"/>
</dbReference>
<dbReference type="InterPro" id="IPR013121">
    <property type="entry name" value="Fe_red_NAD-bd_6"/>
</dbReference>
<dbReference type="InterPro" id="IPR039261">
    <property type="entry name" value="FNR_nucleotide-bd"/>
</dbReference>
<dbReference type="InterPro" id="IPR019791">
    <property type="entry name" value="Haem_peroxidase_animal"/>
</dbReference>
<dbReference type="InterPro" id="IPR010255">
    <property type="entry name" value="Haem_peroxidase_sf"/>
</dbReference>
<dbReference type="InterPro" id="IPR037120">
    <property type="entry name" value="Haem_peroxidase_sf_animal"/>
</dbReference>
<dbReference type="InterPro" id="IPR050369">
    <property type="entry name" value="RBOH/FRE"/>
</dbReference>
<dbReference type="InterPro" id="IPR017938">
    <property type="entry name" value="Riboflavin_synthase-like_b-brl"/>
</dbReference>
<dbReference type="PANTHER" id="PTHR11972:SF175">
    <property type="entry name" value="NAD(P)H OXIDASE (H2O2-FORMING)"/>
    <property type="match status" value="1"/>
</dbReference>
<dbReference type="PANTHER" id="PTHR11972">
    <property type="entry name" value="NADPH OXIDASE"/>
    <property type="match status" value="1"/>
</dbReference>
<dbReference type="Pfam" id="PF03098">
    <property type="entry name" value="An_peroxidase"/>
    <property type="match status" value="1"/>
</dbReference>
<dbReference type="Pfam" id="PF08022">
    <property type="entry name" value="FAD_binding_8"/>
    <property type="match status" value="1"/>
</dbReference>
<dbReference type="Pfam" id="PF01794">
    <property type="entry name" value="Ferric_reduct"/>
    <property type="match status" value="1"/>
</dbReference>
<dbReference type="Pfam" id="PF08030">
    <property type="entry name" value="NAD_binding_6"/>
    <property type="match status" value="1"/>
</dbReference>
<dbReference type="PRINTS" id="PR00457">
    <property type="entry name" value="ANPEROXIDASE"/>
</dbReference>
<dbReference type="SFLD" id="SFLDS00052">
    <property type="entry name" value="Ferric_Reductase_Domain"/>
    <property type="match status" value="1"/>
</dbReference>
<dbReference type="SFLD" id="SFLDG01168">
    <property type="entry name" value="Ferric_reductase_subgroup_(FRE"/>
    <property type="match status" value="1"/>
</dbReference>
<dbReference type="SFLD" id="SFLDG01169">
    <property type="entry name" value="NADPH_oxidase_subgroup_(NOX)"/>
    <property type="match status" value="1"/>
</dbReference>
<dbReference type="SUPFAM" id="SSF47473">
    <property type="entry name" value="EF-hand"/>
    <property type="match status" value="1"/>
</dbReference>
<dbReference type="SUPFAM" id="SSF52343">
    <property type="entry name" value="Ferredoxin reductase-like, C-terminal NADP-linked domain"/>
    <property type="match status" value="1"/>
</dbReference>
<dbReference type="SUPFAM" id="SSF48113">
    <property type="entry name" value="Heme-dependent peroxidases"/>
    <property type="match status" value="1"/>
</dbReference>
<dbReference type="SUPFAM" id="SSF63380">
    <property type="entry name" value="Riboflavin synthase domain-like"/>
    <property type="match status" value="1"/>
</dbReference>
<dbReference type="PROSITE" id="PS50222">
    <property type="entry name" value="EF_HAND_2"/>
    <property type="match status" value="2"/>
</dbReference>
<dbReference type="PROSITE" id="PS51384">
    <property type="entry name" value="FAD_FR"/>
    <property type="match status" value="1"/>
</dbReference>
<dbReference type="PROSITE" id="PS50292">
    <property type="entry name" value="PEROXIDASE_3"/>
    <property type="match status" value="1"/>
</dbReference>
<organism>
    <name type="scientific">Caenorhabditis elegans</name>
    <dbReference type="NCBI Taxonomy" id="6239"/>
    <lineage>
        <taxon>Eukaryota</taxon>
        <taxon>Metazoa</taxon>
        <taxon>Ecdysozoa</taxon>
        <taxon>Nematoda</taxon>
        <taxon>Chromadorea</taxon>
        <taxon>Rhabditida</taxon>
        <taxon>Rhabditina</taxon>
        <taxon>Rhabditomorpha</taxon>
        <taxon>Rhabditoidea</taxon>
        <taxon>Rhabditidae</taxon>
        <taxon>Peloderinae</taxon>
        <taxon>Caenorhabditis</taxon>
    </lineage>
</organism>